<keyword id="KW-0067">ATP-binding</keyword>
<keyword id="KW-0436">Ligase</keyword>
<keyword id="KW-0547">Nucleotide-binding</keyword>
<keyword id="KW-0554">One-carbon metabolism</keyword>
<accession>Q99TD2</accession>
<dbReference type="EC" id="6.3.4.3" evidence="1"/>
<dbReference type="EMBL" id="BA000017">
    <property type="protein sequence ID" value="BAB57894.1"/>
    <property type="molecule type" value="Genomic_DNA"/>
</dbReference>
<dbReference type="RefSeq" id="WP_000149407.1">
    <property type="nucleotide sequence ID" value="NC_002758.2"/>
</dbReference>
<dbReference type="SMR" id="Q99TD2"/>
<dbReference type="KEGG" id="sav:SAV1732"/>
<dbReference type="HOGENOM" id="CLU_003601_3_3_9"/>
<dbReference type="PhylomeDB" id="Q99TD2"/>
<dbReference type="UniPathway" id="UPA00193"/>
<dbReference type="Proteomes" id="UP000002481">
    <property type="component" value="Chromosome"/>
</dbReference>
<dbReference type="GO" id="GO:0005524">
    <property type="term" value="F:ATP binding"/>
    <property type="evidence" value="ECO:0007669"/>
    <property type="project" value="UniProtKB-UniRule"/>
</dbReference>
<dbReference type="GO" id="GO:0004329">
    <property type="term" value="F:formate-tetrahydrofolate ligase activity"/>
    <property type="evidence" value="ECO:0007669"/>
    <property type="project" value="UniProtKB-UniRule"/>
</dbReference>
<dbReference type="GO" id="GO:0035999">
    <property type="term" value="P:tetrahydrofolate interconversion"/>
    <property type="evidence" value="ECO:0007669"/>
    <property type="project" value="UniProtKB-UniRule"/>
</dbReference>
<dbReference type="CDD" id="cd00477">
    <property type="entry name" value="FTHFS"/>
    <property type="match status" value="1"/>
</dbReference>
<dbReference type="FunFam" id="3.30.1510.10:FF:000001">
    <property type="entry name" value="Formate--tetrahydrofolate ligase"/>
    <property type="match status" value="1"/>
</dbReference>
<dbReference type="FunFam" id="3.10.410.10:FF:000001">
    <property type="entry name" value="Putative formate--tetrahydrofolate ligase"/>
    <property type="match status" value="1"/>
</dbReference>
<dbReference type="Gene3D" id="3.30.1510.10">
    <property type="entry name" value="Domain 2, N(10)-formyltetrahydrofolate synthetase"/>
    <property type="match status" value="1"/>
</dbReference>
<dbReference type="Gene3D" id="3.10.410.10">
    <property type="entry name" value="Formyltetrahydrofolate synthetase, domain 3"/>
    <property type="match status" value="1"/>
</dbReference>
<dbReference type="Gene3D" id="3.40.50.300">
    <property type="entry name" value="P-loop containing nucleotide triphosphate hydrolases"/>
    <property type="match status" value="1"/>
</dbReference>
<dbReference type="HAMAP" id="MF_01543">
    <property type="entry name" value="FTHFS"/>
    <property type="match status" value="1"/>
</dbReference>
<dbReference type="InterPro" id="IPR000559">
    <property type="entry name" value="Formate_THF_ligase"/>
</dbReference>
<dbReference type="InterPro" id="IPR020628">
    <property type="entry name" value="Formate_THF_ligase_CS"/>
</dbReference>
<dbReference type="InterPro" id="IPR027417">
    <property type="entry name" value="P-loop_NTPase"/>
</dbReference>
<dbReference type="NCBIfam" id="NF010030">
    <property type="entry name" value="PRK13505.1"/>
    <property type="match status" value="1"/>
</dbReference>
<dbReference type="Pfam" id="PF01268">
    <property type="entry name" value="FTHFS"/>
    <property type="match status" value="1"/>
</dbReference>
<dbReference type="SUPFAM" id="SSF52540">
    <property type="entry name" value="P-loop containing nucleoside triphosphate hydrolases"/>
    <property type="match status" value="1"/>
</dbReference>
<dbReference type="PROSITE" id="PS00721">
    <property type="entry name" value="FTHFS_1"/>
    <property type="match status" value="1"/>
</dbReference>
<dbReference type="PROSITE" id="PS00722">
    <property type="entry name" value="FTHFS_2"/>
    <property type="match status" value="1"/>
</dbReference>
<reference key="1">
    <citation type="journal article" date="2001" name="Lancet">
        <title>Whole genome sequencing of meticillin-resistant Staphylococcus aureus.</title>
        <authorList>
            <person name="Kuroda M."/>
            <person name="Ohta T."/>
            <person name="Uchiyama I."/>
            <person name="Baba T."/>
            <person name="Yuzawa H."/>
            <person name="Kobayashi I."/>
            <person name="Cui L."/>
            <person name="Oguchi A."/>
            <person name="Aoki K."/>
            <person name="Nagai Y."/>
            <person name="Lian J.-Q."/>
            <person name="Ito T."/>
            <person name="Kanamori M."/>
            <person name="Matsumaru H."/>
            <person name="Maruyama A."/>
            <person name="Murakami H."/>
            <person name="Hosoyama A."/>
            <person name="Mizutani-Ui Y."/>
            <person name="Takahashi N.K."/>
            <person name="Sawano T."/>
            <person name="Inoue R."/>
            <person name="Kaito C."/>
            <person name="Sekimizu K."/>
            <person name="Hirakawa H."/>
            <person name="Kuhara S."/>
            <person name="Goto S."/>
            <person name="Yabuzaki J."/>
            <person name="Kanehisa M."/>
            <person name="Yamashita A."/>
            <person name="Oshima K."/>
            <person name="Furuya K."/>
            <person name="Yoshino C."/>
            <person name="Shiba T."/>
            <person name="Hattori M."/>
            <person name="Ogasawara N."/>
            <person name="Hayashi H."/>
            <person name="Hiramatsu K."/>
        </authorList>
    </citation>
    <scope>NUCLEOTIDE SEQUENCE [LARGE SCALE GENOMIC DNA]</scope>
    <source>
        <strain>Mu50 / ATCC 700699</strain>
    </source>
</reference>
<gene>
    <name evidence="1" type="primary">fhs</name>
    <name type="ordered locus">SAV1732</name>
</gene>
<protein>
    <recommendedName>
        <fullName evidence="1">Formate--tetrahydrofolate ligase</fullName>
        <ecNumber evidence="1">6.3.4.3</ecNumber>
    </recommendedName>
    <alternativeName>
        <fullName evidence="1">Formyltetrahydrofolate synthetase</fullName>
        <shortName evidence="1">FHS</shortName>
        <shortName evidence="1">FTHFS</shortName>
    </alternativeName>
</protein>
<evidence type="ECO:0000255" key="1">
    <source>
        <dbReference type="HAMAP-Rule" id="MF_01543"/>
    </source>
</evidence>
<name>FTHS_STAAM</name>
<sequence>MTHLSDLDIANQSTLQPIKDIAASVGISEDALEPYGHYKAKIDINKITPRENKGKVVLVTAMSPTPAGEGKSTVTVGLADAFHELNKNVMVALREPALGPTFGIKGGATGGGYAQVLPMEDINLHFNGDFHAITTANNALSAFIDNHIHQGNELGIDQRRIEWKRVLDMNDRALRHVNVGLGGPTNGVPREDGFNITVASEIMAILCLSRSIKDLKDKISRITIGYTRDRKPVTVADLKVQGALAMILKDAIKPNLVQSIEGTPALVHGGPFANIAHGCNSILATETARDLADIVVTEAGFGSDLGAEKFMDIKAREAGFDLAAVVVVATIRALKMHGGVAKDNLKEENVEAVKAGIVNLERHVNNIKKFGVEPVVAINAFIHDTDAEVEYVKSWAKENNVRIALTEVWEKGGKGGVDLANEVLEVIDQPNSFKPLYELELPLEQKIEKIVTEIYGGSKVTFSSKAQKQLKQFKENGWDNYPVCMAKTQYSFSDDQTLLGAPSGFEITIRELEAKTGAGFIVALTGAIMTMPGLPKKPAALNMDVTDDGHAIGLF</sequence>
<proteinExistence type="inferred from homology"/>
<organism>
    <name type="scientific">Staphylococcus aureus (strain Mu50 / ATCC 700699)</name>
    <dbReference type="NCBI Taxonomy" id="158878"/>
    <lineage>
        <taxon>Bacteria</taxon>
        <taxon>Bacillati</taxon>
        <taxon>Bacillota</taxon>
        <taxon>Bacilli</taxon>
        <taxon>Bacillales</taxon>
        <taxon>Staphylococcaceae</taxon>
        <taxon>Staphylococcus</taxon>
    </lineage>
</organism>
<comment type="catalytic activity">
    <reaction evidence="1">
        <text>(6S)-5,6,7,8-tetrahydrofolate + formate + ATP = (6R)-10-formyltetrahydrofolate + ADP + phosphate</text>
        <dbReference type="Rhea" id="RHEA:20221"/>
        <dbReference type="ChEBI" id="CHEBI:15740"/>
        <dbReference type="ChEBI" id="CHEBI:30616"/>
        <dbReference type="ChEBI" id="CHEBI:43474"/>
        <dbReference type="ChEBI" id="CHEBI:57453"/>
        <dbReference type="ChEBI" id="CHEBI:195366"/>
        <dbReference type="ChEBI" id="CHEBI:456216"/>
        <dbReference type="EC" id="6.3.4.3"/>
    </reaction>
</comment>
<comment type="pathway">
    <text evidence="1">One-carbon metabolism; tetrahydrofolate interconversion.</text>
</comment>
<comment type="similarity">
    <text evidence="1">Belongs to the formate--tetrahydrofolate ligase family.</text>
</comment>
<feature type="chain" id="PRO_0000199378" description="Formate--tetrahydrofolate ligase">
    <location>
        <begin position="1"/>
        <end position="555"/>
    </location>
</feature>
<feature type="binding site" evidence="1">
    <location>
        <begin position="65"/>
        <end position="72"/>
    </location>
    <ligand>
        <name>ATP</name>
        <dbReference type="ChEBI" id="CHEBI:30616"/>
    </ligand>
</feature>